<name>ENGB_SHIB3</name>
<proteinExistence type="inferred from homology"/>
<organism>
    <name type="scientific">Shigella boydii serotype 18 (strain CDC 3083-94 / BS512)</name>
    <dbReference type="NCBI Taxonomy" id="344609"/>
    <lineage>
        <taxon>Bacteria</taxon>
        <taxon>Pseudomonadati</taxon>
        <taxon>Pseudomonadota</taxon>
        <taxon>Gammaproteobacteria</taxon>
        <taxon>Enterobacterales</taxon>
        <taxon>Enterobacteriaceae</taxon>
        <taxon>Shigella</taxon>
    </lineage>
</organism>
<keyword id="KW-0131">Cell cycle</keyword>
<keyword id="KW-0132">Cell division</keyword>
<keyword id="KW-0342">GTP-binding</keyword>
<keyword id="KW-0460">Magnesium</keyword>
<keyword id="KW-0479">Metal-binding</keyword>
<keyword id="KW-0547">Nucleotide-binding</keyword>
<keyword id="KW-1185">Reference proteome</keyword>
<keyword id="KW-0717">Septation</keyword>
<comment type="function">
    <text evidence="1">Necessary for normal cell division and for the maintenance of normal septation.</text>
</comment>
<comment type="cofactor">
    <cofactor evidence="1">
        <name>Mg(2+)</name>
        <dbReference type="ChEBI" id="CHEBI:18420"/>
    </cofactor>
</comment>
<comment type="similarity">
    <text evidence="1">Belongs to the TRAFAC class TrmE-Era-EngA-EngB-Septin-like GTPase superfamily. EngB GTPase family.</text>
</comment>
<accession>B2TVL1</accession>
<protein>
    <recommendedName>
        <fullName evidence="1">Probable GTP-binding protein EngB</fullName>
    </recommendedName>
</protein>
<evidence type="ECO:0000255" key="1">
    <source>
        <dbReference type="HAMAP-Rule" id="MF_00321"/>
    </source>
</evidence>
<dbReference type="EMBL" id="CP001063">
    <property type="protein sequence ID" value="ACD08511.1"/>
    <property type="molecule type" value="Genomic_DNA"/>
</dbReference>
<dbReference type="SMR" id="B2TVL1"/>
<dbReference type="STRING" id="344609.SbBS512_E4339"/>
<dbReference type="KEGG" id="sbc:SbBS512_E4339"/>
<dbReference type="HOGENOM" id="CLU_033732_1_2_6"/>
<dbReference type="Proteomes" id="UP000001030">
    <property type="component" value="Chromosome"/>
</dbReference>
<dbReference type="GO" id="GO:0005829">
    <property type="term" value="C:cytosol"/>
    <property type="evidence" value="ECO:0007669"/>
    <property type="project" value="TreeGrafter"/>
</dbReference>
<dbReference type="GO" id="GO:0005525">
    <property type="term" value="F:GTP binding"/>
    <property type="evidence" value="ECO:0007669"/>
    <property type="project" value="UniProtKB-UniRule"/>
</dbReference>
<dbReference type="GO" id="GO:0046872">
    <property type="term" value="F:metal ion binding"/>
    <property type="evidence" value="ECO:0007669"/>
    <property type="project" value="UniProtKB-KW"/>
</dbReference>
<dbReference type="GO" id="GO:0000917">
    <property type="term" value="P:division septum assembly"/>
    <property type="evidence" value="ECO:0007669"/>
    <property type="project" value="UniProtKB-KW"/>
</dbReference>
<dbReference type="CDD" id="cd01876">
    <property type="entry name" value="YihA_EngB"/>
    <property type="match status" value="1"/>
</dbReference>
<dbReference type="FunFam" id="3.40.50.300:FF:000098">
    <property type="entry name" value="Probable GTP-binding protein EngB"/>
    <property type="match status" value="1"/>
</dbReference>
<dbReference type="Gene3D" id="3.40.50.300">
    <property type="entry name" value="P-loop containing nucleotide triphosphate hydrolases"/>
    <property type="match status" value="1"/>
</dbReference>
<dbReference type="HAMAP" id="MF_00321">
    <property type="entry name" value="GTPase_EngB"/>
    <property type="match status" value="1"/>
</dbReference>
<dbReference type="InterPro" id="IPR030393">
    <property type="entry name" value="G_ENGB_dom"/>
</dbReference>
<dbReference type="InterPro" id="IPR006073">
    <property type="entry name" value="GTP-bd"/>
</dbReference>
<dbReference type="InterPro" id="IPR019987">
    <property type="entry name" value="GTP-bd_ribosome_bio_YsxC"/>
</dbReference>
<dbReference type="InterPro" id="IPR027417">
    <property type="entry name" value="P-loop_NTPase"/>
</dbReference>
<dbReference type="NCBIfam" id="TIGR03598">
    <property type="entry name" value="GTPase_YsxC"/>
    <property type="match status" value="1"/>
</dbReference>
<dbReference type="PANTHER" id="PTHR11649:SF13">
    <property type="entry name" value="ENGB-TYPE G DOMAIN-CONTAINING PROTEIN"/>
    <property type="match status" value="1"/>
</dbReference>
<dbReference type="PANTHER" id="PTHR11649">
    <property type="entry name" value="MSS1/TRME-RELATED GTP-BINDING PROTEIN"/>
    <property type="match status" value="1"/>
</dbReference>
<dbReference type="Pfam" id="PF01926">
    <property type="entry name" value="MMR_HSR1"/>
    <property type="match status" value="1"/>
</dbReference>
<dbReference type="SUPFAM" id="SSF52540">
    <property type="entry name" value="P-loop containing nucleoside triphosphate hydrolases"/>
    <property type="match status" value="1"/>
</dbReference>
<dbReference type="PROSITE" id="PS51706">
    <property type="entry name" value="G_ENGB"/>
    <property type="match status" value="1"/>
</dbReference>
<gene>
    <name evidence="1" type="primary">engB</name>
    <name type="ordered locus">SbBS512_E4339</name>
</gene>
<reference key="1">
    <citation type="submission" date="2008-05" db="EMBL/GenBank/DDBJ databases">
        <title>Complete sequence of Shigella boydii serotype 18 strain BS512.</title>
        <authorList>
            <person name="Rasko D.A."/>
            <person name="Rosovitz M."/>
            <person name="Maurelli A.T."/>
            <person name="Myers G."/>
            <person name="Seshadri R."/>
            <person name="Cer R."/>
            <person name="Jiang L."/>
            <person name="Ravel J."/>
            <person name="Sebastian Y."/>
        </authorList>
    </citation>
    <scope>NUCLEOTIDE SEQUENCE [LARGE SCALE GENOMIC DNA]</scope>
    <source>
        <strain>CDC 3083-94 / BS512</strain>
    </source>
</reference>
<feature type="chain" id="PRO_1000116005" description="Probable GTP-binding protein EngB">
    <location>
        <begin position="1"/>
        <end position="210"/>
    </location>
</feature>
<feature type="domain" description="EngB-type G" evidence="1">
    <location>
        <begin position="25"/>
        <end position="199"/>
    </location>
</feature>
<feature type="binding site" evidence="1">
    <location>
        <begin position="33"/>
        <end position="40"/>
    </location>
    <ligand>
        <name>GTP</name>
        <dbReference type="ChEBI" id="CHEBI:37565"/>
    </ligand>
</feature>
<feature type="binding site" evidence="1">
    <location>
        <position position="40"/>
    </location>
    <ligand>
        <name>Mg(2+)</name>
        <dbReference type="ChEBI" id="CHEBI:18420"/>
    </ligand>
</feature>
<feature type="binding site" evidence="1">
    <location>
        <begin position="60"/>
        <end position="64"/>
    </location>
    <ligand>
        <name>GTP</name>
        <dbReference type="ChEBI" id="CHEBI:37565"/>
    </ligand>
</feature>
<feature type="binding site" evidence="1">
    <location>
        <position position="62"/>
    </location>
    <ligand>
        <name>Mg(2+)</name>
        <dbReference type="ChEBI" id="CHEBI:18420"/>
    </ligand>
</feature>
<feature type="binding site" evidence="1">
    <location>
        <begin position="78"/>
        <end position="81"/>
    </location>
    <ligand>
        <name>GTP</name>
        <dbReference type="ChEBI" id="CHEBI:37565"/>
    </ligand>
</feature>
<feature type="binding site" evidence="1">
    <location>
        <begin position="145"/>
        <end position="148"/>
    </location>
    <ligand>
        <name>GTP</name>
        <dbReference type="ChEBI" id="CHEBI:37565"/>
    </ligand>
</feature>
<feature type="binding site" evidence="1">
    <location>
        <begin position="178"/>
        <end position="180"/>
    </location>
    <ligand>
        <name>GTP</name>
        <dbReference type="ChEBI" id="CHEBI:37565"/>
    </ligand>
</feature>
<sequence length="210" mass="23561">MTNLNYQQTHFVMSAPDIRHLPSDTGIEVAFAGRSNAGKSSALNTLTNQKSLARTSKTPGRTQLINLFEVADGKRLVDLPGYGYAEVPEEMKRKWQRALGEYLEKRQSLQGLVVLMDIRHPLKDLDQQMIEWAVDSNIAVLVLLTKADKLASGARKAQLNMVREAVLAFNGDVQVETFSSLKKQGVDKLRQKLDTWFSEMQPVEETQDGE</sequence>